<dbReference type="EMBL" id="AP009552">
    <property type="protein sequence ID" value="BAG01258.1"/>
    <property type="molecule type" value="Genomic_DNA"/>
</dbReference>
<dbReference type="RefSeq" id="WP_012264844.1">
    <property type="nucleotide sequence ID" value="NC_010296.1"/>
</dbReference>
<dbReference type="SMR" id="B0JU70"/>
<dbReference type="STRING" id="449447.MAE_14360"/>
<dbReference type="PaxDb" id="449447-MAE_14360"/>
<dbReference type="EnsemblBacteria" id="BAG01258">
    <property type="protein sequence ID" value="BAG01258"/>
    <property type="gene ID" value="MAE_14360"/>
</dbReference>
<dbReference type="KEGG" id="mar:MAE_14360"/>
<dbReference type="PATRIC" id="fig|449447.4.peg.1317"/>
<dbReference type="eggNOG" id="COG0779">
    <property type="taxonomic scope" value="Bacteria"/>
</dbReference>
<dbReference type="HOGENOM" id="CLU_070525_2_1_3"/>
<dbReference type="BioCyc" id="MAER449447:MAE_RS06320-MONOMER"/>
<dbReference type="Proteomes" id="UP000001510">
    <property type="component" value="Chromosome"/>
</dbReference>
<dbReference type="GO" id="GO:0005829">
    <property type="term" value="C:cytosol"/>
    <property type="evidence" value="ECO:0007669"/>
    <property type="project" value="TreeGrafter"/>
</dbReference>
<dbReference type="GO" id="GO:0000028">
    <property type="term" value="P:ribosomal small subunit assembly"/>
    <property type="evidence" value="ECO:0007669"/>
    <property type="project" value="TreeGrafter"/>
</dbReference>
<dbReference type="GO" id="GO:0006412">
    <property type="term" value="P:translation"/>
    <property type="evidence" value="ECO:0007669"/>
    <property type="project" value="TreeGrafter"/>
</dbReference>
<dbReference type="Gene3D" id="3.30.300.70">
    <property type="entry name" value="RimP-like superfamily, N-terminal"/>
    <property type="match status" value="1"/>
</dbReference>
<dbReference type="HAMAP" id="MF_01077">
    <property type="entry name" value="RimP"/>
    <property type="match status" value="1"/>
</dbReference>
<dbReference type="InterPro" id="IPR003728">
    <property type="entry name" value="Ribosome_maturation_RimP"/>
</dbReference>
<dbReference type="InterPro" id="IPR036847">
    <property type="entry name" value="RimP_C_sf"/>
</dbReference>
<dbReference type="InterPro" id="IPR028989">
    <property type="entry name" value="RimP_N"/>
</dbReference>
<dbReference type="InterPro" id="IPR035956">
    <property type="entry name" value="RimP_N_sf"/>
</dbReference>
<dbReference type="NCBIfam" id="NF000935">
    <property type="entry name" value="PRK00092.3-3"/>
    <property type="match status" value="1"/>
</dbReference>
<dbReference type="PANTHER" id="PTHR33867">
    <property type="entry name" value="RIBOSOME MATURATION FACTOR RIMP"/>
    <property type="match status" value="1"/>
</dbReference>
<dbReference type="PANTHER" id="PTHR33867:SF1">
    <property type="entry name" value="RIBOSOME MATURATION FACTOR RIMP"/>
    <property type="match status" value="1"/>
</dbReference>
<dbReference type="Pfam" id="PF02576">
    <property type="entry name" value="RimP_N"/>
    <property type="match status" value="1"/>
</dbReference>
<dbReference type="SUPFAM" id="SSF74942">
    <property type="entry name" value="YhbC-like, C-terminal domain"/>
    <property type="match status" value="1"/>
</dbReference>
<dbReference type="SUPFAM" id="SSF75420">
    <property type="entry name" value="YhbC-like, N-terminal domain"/>
    <property type="match status" value="1"/>
</dbReference>
<reference key="1">
    <citation type="journal article" date="2007" name="DNA Res.">
        <title>Complete genomic structure of the bloom-forming toxic cyanobacterium Microcystis aeruginosa NIES-843.</title>
        <authorList>
            <person name="Kaneko T."/>
            <person name="Nakajima N."/>
            <person name="Okamoto S."/>
            <person name="Suzuki I."/>
            <person name="Tanabe Y."/>
            <person name="Tamaoki M."/>
            <person name="Nakamura Y."/>
            <person name="Kasai F."/>
            <person name="Watanabe A."/>
            <person name="Kawashima K."/>
            <person name="Kishida Y."/>
            <person name="Ono A."/>
            <person name="Shimizu Y."/>
            <person name="Takahashi C."/>
            <person name="Minami C."/>
            <person name="Fujishiro T."/>
            <person name="Kohara M."/>
            <person name="Katoh M."/>
            <person name="Nakazaki N."/>
            <person name="Nakayama S."/>
            <person name="Yamada M."/>
            <person name="Tabata S."/>
            <person name="Watanabe M.M."/>
        </authorList>
    </citation>
    <scope>NUCLEOTIDE SEQUENCE [LARGE SCALE GENOMIC DNA]</scope>
    <source>
        <strain>NIES-843 / IAM M-247</strain>
    </source>
</reference>
<comment type="function">
    <text evidence="1">Required for maturation of 30S ribosomal subunits.</text>
</comment>
<comment type="subcellular location">
    <subcellularLocation>
        <location evidence="1">Cytoplasm</location>
    </subcellularLocation>
</comment>
<comment type="similarity">
    <text evidence="1">Belongs to the RimP family.</text>
</comment>
<protein>
    <recommendedName>
        <fullName evidence="1">Ribosome maturation factor RimP</fullName>
    </recommendedName>
</protein>
<gene>
    <name evidence="1" type="primary">rimP</name>
    <name type="ordered locus">MAE_14360</name>
</gene>
<evidence type="ECO:0000255" key="1">
    <source>
        <dbReference type="HAMAP-Rule" id="MF_01077"/>
    </source>
</evidence>
<proteinExistence type="inferred from homology"/>
<accession>B0JU70</accession>
<keyword id="KW-0963">Cytoplasm</keyword>
<keyword id="KW-0690">Ribosome biogenesis</keyword>
<name>RIMP_MICAN</name>
<feature type="chain" id="PRO_1000136779" description="Ribosome maturation factor RimP">
    <location>
        <begin position="1"/>
        <end position="156"/>
    </location>
</feature>
<sequence>MTHPLIPDLLHLAIPIAENLGLEVVDIVFQTNKRPPVLRVDIRNLAGDTGLEDCEQMSRALETALDSQEILPGAYVLEISSPGISRQLSSEREFQSFKGFPVIVTGQDSQGKPQEWRGKLQGRDEQSIYLNQKGRSLTIDRTTVISVRLDERRSNQ</sequence>
<organism>
    <name type="scientific">Microcystis aeruginosa (strain NIES-843 / IAM M-2473)</name>
    <dbReference type="NCBI Taxonomy" id="449447"/>
    <lineage>
        <taxon>Bacteria</taxon>
        <taxon>Bacillati</taxon>
        <taxon>Cyanobacteriota</taxon>
        <taxon>Cyanophyceae</taxon>
        <taxon>Oscillatoriophycideae</taxon>
        <taxon>Chroococcales</taxon>
        <taxon>Microcystaceae</taxon>
        <taxon>Microcystis</taxon>
    </lineage>
</organism>